<evidence type="ECO:0000255" key="1">
    <source>
        <dbReference type="HAMAP-Rule" id="MF_00229"/>
    </source>
</evidence>
<reference key="1">
    <citation type="journal article" date="2005" name="Science">
        <title>Life at depth: Photobacterium profundum genome sequence and expression analysis.</title>
        <authorList>
            <person name="Vezzi A."/>
            <person name="Campanaro S."/>
            <person name="D'Angelo M."/>
            <person name="Simonato F."/>
            <person name="Vitulo N."/>
            <person name="Lauro F.M."/>
            <person name="Cestaro A."/>
            <person name="Malacrida G."/>
            <person name="Simionati B."/>
            <person name="Cannata N."/>
            <person name="Romualdi C."/>
            <person name="Bartlett D.H."/>
            <person name="Valle G."/>
        </authorList>
    </citation>
    <scope>NUCLEOTIDE SEQUENCE [LARGE SCALE GENOMIC DNA]</scope>
    <source>
        <strain>ATCC BAA-1253 / SS9</strain>
    </source>
</reference>
<dbReference type="EC" id="4.3.1.3" evidence="1"/>
<dbReference type="EMBL" id="CR378670">
    <property type="protein sequence ID" value="CAG20570.1"/>
    <property type="molecule type" value="Genomic_DNA"/>
</dbReference>
<dbReference type="RefSeq" id="WP_011218861.1">
    <property type="nucleotide sequence ID" value="NC_006370.1"/>
</dbReference>
<dbReference type="SMR" id="Q6LQ56"/>
<dbReference type="STRING" id="298386.PBPRA2173"/>
<dbReference type="KEGG" id="ppr:PBPRA2173"/>
<dbReference type="eggNOG" id="COG2986">
    <property type="taxonomic scope" value="Bacteria"/>
</dbReference>
<dbReference type="HOGENOM" id="CLU_014801_4_0_6"/>
<dbReference type="UniPathway" id="UPA00379">
    <property type="reaction ID" value="UER00549"/>
</dbReference>
<dbReference type="Proteomes" id="UP000000593">
    <property type="component" value="Chromosome 1"/>
</dbReference>
<dbReference type="GO" id="GO:0005737">
    <property type="term" value="C:cytoplasm"/>
    <property type="evidence" value="ECO:0007669"/>
    <property type="project" value="UniProtKB-SubCell"/>
</dbReference>
<dbReference type="GO" id="GO:0004397">
    <property type="term" value="F:histidine ammonia-lyase activity"/>
    <property type="evidence" value="ECO:0007669"/>
    <property type="project" value="UniProtKB-UniRule"/>
</dbReference>
<dbReference type="GO" id="GO:0019556">
    <property type="term" value="P:L-histidine catabolic process to glutamate and formamide"/>
    <property type="evidence" value="ECO:0007669"/>
    <property type="project" value="UniProtKB-UniPathway"/>
</dbReference>
<dbReference type="GO" id="GO:0019557">
    <property type="term" value="P:L-histidine catabolic process to glutamate and formate"/>
    <property type="evidence" value="ECO:0007669"/>
    <property type="project" value="UniProtKB-UniPathway"/>
</dbReference>
<dbReference type="CDD" id="cd00332">
    <property type="entry name" value="PAL-HAL"/>
    <property type="match status" value="1"/>
</dbReference>
<dbReference type="FunFam" id="1.10.275.10:FF:000005">
    <property type="entry name" value="Histidine ammonia-lyase"/>
    <property type="match status" value="1"/>
</dbReference>
<dbReference type="FunFam" id="1.20.200.10:FF:000003">
    <property type="entry name" value="Histidine ammonia-lyase"/>
    <property type="match status" value="1"/>
</dbReference>
<dbReference type="Gene3D" id="1.20.200.10">
    <property type="entry name" value="Fumarase/aspartase (Central domain)"/>
    <property type="match status" value="1"/>
</dbReference>
<dbReference type="Gene3D" id="1.10.275.10">
    <property type="entry name" value="Fumarase/aspartase (N-terminal domain)"/>
    <property type="match status" value="1"/>
</dbReference>
<dbReference type="HAMAP" id="MF_00229">
    <property type="entry name" value="His_ammonia_lyase"/>
    <property type="match status" value="1"/>
</dbReference>
<dbReference type="InterPro" id="IPR001106">
    <property type="entry name" value="Aromatic_Lyase"/>
</dbReference>
<dbReference type="InterPro" id="IPR024083">
    <property type="entry name" value="Fumarase/histidase_N"/>
</dbReference>
<dbReference type="InterPro" id="IPR005921">
    <property type="entry name" value="HutH"/>
</dbReference>
<dbReference type="InterPro" id="IPR008948">
    <property type="entry name" value="L-Aspartase-like"/>
</dbReference>
<dbReference type="InterPro" id="IPR022313">
    <property type="entry name" value="Phe/His_NH3-lyase_AS"/>
</dbReference>
<dbReference type="NCBIfam" id="TIGR01225">
    <property type="entry name" value="hutH"/>
    <property type="match status" value="1"/>
</dbReference>
<dbReference type="NCBIfam" id="NF006871">
    <property type="entry name" value="PRK09367.1"/>
    <property type="match status" value="1"/>
</dbReference>
<dbReference type="PANTHER" id="PTHR10362">
    <property type="entry name" value="HISTIDINE AMMONIA-LYASE"/>
    <property type="match status" value="1"/>
</dbReference>
<dbReference type="Pfam" id="PF00221">
    <property type="entry name" value="Lyase_aromatic"/>
    <property type="match status" value="1"/>
</dbReference>
<dbReference type="SUPFAM" id="SSF48557">
    <property type="entry name" value="L-aspartase-like"/>
    <property type="match status" value="1"/>
</dbReference>
<dbReference type="PROSITE" id="PS00488">
    <property type="entry name" value="PAL_HISTIDASE"/>
    <property type="match status" value="1"/>
</dbReference>
<feature type="chain" id="PRO_0000161014" description="Histidine ammonia-lyase">
    <location>
        <begin position="1"/>
        <end position="510"/>
    </location>
</feature>
<feature type="modified residue" description="2,3-didehydroalanine (Ser)" evidence="1">
    <location>
        <position position="144"/>
    </location>
</feature>
<feature type="cross-link" description="5-imidazolinone (Ala-Gly)" evidence="1">
    <location>
        <begin position="143"/>
        <end position="145"/>
    </location>
</feature>
<accession>Q6LQ56</accession>
<keyword id="KW-0963">Cytoplasm</keyword>
<keyword id="KW-0369">Histidine metabolism</keyword>
<keyword id="KW-0456">Lyase</keyword>
<keyword id="KW-1185">Reference proteome</keyword>
<name>HUTH_PHOPR</name>
<comment type="catalytic activity">
    <reaction evidence="1">
        <text>L-histidine = trans-urocanate + NH4(+)</text>
        <dbReference type="Rhea" id="RHEA:21232"/>
        <dbReference type="ChEBI" id="CHEBI:17771"/>
        <dbReference type="ChEBI" id="CHEBI:28938"/>
        <dbReference type="ChEBI" id="CHEBI:57595"/>
        <dbReference type="EC" id="4.3.1.3"/>
    </reaction>
</comment>
<comment type="pathway">
    <text evidence="1">Amino-acid degradation; L-histidine degradation into L-glutamate; N-formimidoyl-L-glutamate from L-histidine: step 1/3.</text>
</comment>
<comment type="subcellular location">
    <subcellularLocation>
        <location evidence="1">Cytoplasm</location>
    </subcellularLocation>
</comment>
<comment type="PTM">
    <text evidence="1">Contains an active site 4-methylidene-imidazol-5-one (MIO), which is formed autocatalytically by cyclization and dehydration of residues Ala-Ser-Gly.</text>
</comment>
<comment type="similarity">
    <text evidence="1">Belongs to the PAL/histidase family.</text>
</comment>
<protein>
    <recommendedName>
        <fullName evidence="1">Histidine ammonia-lyase</fullName>
        <shortName evidence="1">Histidase</shortName>
        <ecNumber evidence="1">4.3.1.3</ecNumber>
    </recommendedName>
</protein>
<organism>
    <name type="scientific">Photobacterium profundum (strain SS9)</name>
    <dbReference type="NCBI Taxonomy" id="298386"/>
    <lineage>
        <taxon>Bacteria</taxon>
        <taxon>Pseudomonadati</taxon>
        <taxon>Pseudomonadota</taxon>
        <taxon>Gammaproteobacteria</taxon>
        <taxon>Vibrionales</taxon>
        <taxon>Vibrionaceae</taxon>
        <taxon>Photobacterium</taxon>
    </lineage>
</organism>
<gene>
    <name evidence="1" type="primary">hutH</name>
    <name type="ordered locus">PBPRA2173</name>
</gene>
<sequence>MYQLEIIPGKLSLKQLREVSRQPTQLSLTEDALPEMLISAEAVAQVIKDDKVVYGINTGFGLLANTRIAAEDLETLQRSIVLSHAAGIGTFMDDATVRMMIVLKVNSLSRGYSGIRPLVVNALMQLVNTEVYPCIPKKGSVGASGDLAPLAHMSTVLLGEGEARYQGEVITGAQALEIAGLEPITLAPKEGLALLNGTQASTAFALEGFFAAEDLYAAATVCGAMSVDAALGSRRPFDPRIHRVRGHRSQIDAAMGYRHMLGQNSEIGLSHQQCEKVQDPYSLRCQPQVMGACLQQIRNSAVTLEVEANAVSDNPLVFADDGDIISGGNFHAEPVAMAADNLALAIAEIGSLSERRMALLIDSGLSKLPPFLVDNGGVNSGFMIAQVTAAALASENKSLAHPASVDSLPTSANQEDHVSMATFAARRLTDMAENTRGILAVELLAAAQGLDFRSPNKSSELIEQAKMQLRERVSFYDKDRYFAPDIAKANQLLKEATYNALMPATLLPSL</sequence>
<proteinExistence type="inferred from homology"/>